<gene>
    <name type="primary">kdsA</name>
    <name type="ordered locus">HI_1557</name>
</gene>
<keyword id="KW-0002">3D-structure</keyword>
<keyword id="KW-0963">Cytoplasm</keyword>
<keyword id="KW-0448">Lipopolysaccharide biosynthesis</keyword>
<keyword id="KW-1185">Reference proteome</keyword>
<keyword id="KW-0808">Transferase</keyword>
<dbReference type="EC" id="2.5.1.55"/>
<dbReference type="EMBL" id="L42023">
    <property type="protein sequence ID" value="AAC23206.1"/>
    <property type="molecule type" value="Genomic_DNA"/>
</dbReference>
<dbReference type="PIR" id="G64129">
    <property type="entry name" value="G64129"/>
</dbReference>
<dbReference type="RefSeq" id="NP_439706.1">
    <property type="nucleotide sequence ID" value="NC_000907.1"/>
</dbReference>
<dbReference type="PDB" id="1O60">
    <property type="method" value="X-ray"/>
    <property type="resolution" value="1.80 A"/>
    <property type="chains" value="A/B/C/D=1-284"/>
</dbReference>
<dbReference type="PDBsum" id="1O60"/>
<dbReference type="SMR" id="P45251"/>
<dbReference type="STRING" id="71421.HI_1557"/>
<dbReference type="EnsemblBacteria" id="AAC23206">
    <property type="protein sequence ID" value="AAC23206"/>
    <property type="gene ID" value="HI_1557"/>
</dbReference>
<dbReference type="KEGG" id="hin:HI_1557"/>
<dbReference type="PATRIC" id="fig|71421.8.peg.1628"/>
<dbReference type="eggNOG" id="COG2877">
    <property type="taxonomic scope" value="Bacteria"/>
</dbReference>
<dbReference type="HOGENOM" id="CLU_036666_0_0_6"/>
<dbReference type="OrthoDB" id="9776934at2"/>
<dbReference type="PhylomeDB" id="P45251"/>
<dbReference type="BioCyc" id="HINF71421:G1GJ1-1577-MONOMER"/>
<dbReference type="BRENDA" id="2.5.1.55">
    <property type="organism ID" value="2529"/>
</dbReference>
<dbReference type="UniPathway" id="UPA00030"/>
<dbReference type="UniPathway" id="UPA00357">
    <property type="reaction ID" value="UER00474"/>
</dbReference>
<dbReference type="EvolutionaryTrace" id="P45251"/>
<dbReference type="Proteomes" id="UP000000579">
    <property type="component" value="Chromosome"/>
</dbReference>
<dbReference type="GO" id="GO:0005829">
    <property type="term" value="C:cytosol"/>
    <property type="evidence" value="ECO:0000318"/>
    <property type="project" value="GO_Central"/>
</dbReference>
<dbReference type="GO" id="GO:0008676">
    <property type="term" value="F:3-deoxy-8-phosphooctulonate synthase activity"/>
    <property type="evidence" value="ECO:0000318"/>
    <property type="project" value="GO_Central"/>
</dbReference>
<dbReference type="GO" id="GO:0019294">
    <property type="term" value="P:keto-3-deoxy-D-manno-octulosonic acid biosynthetic process"/>
    <property type="evidence" value="ECO:0000318"/>
    <property type="project" value="GO_Central"/>
</dbReference>
<dbReference type="FunFam" id="3.20.20.70:FF:000058">
    <property type="entry name" value="2-dehydro-3-deoxyphosphooctonate aldolase"/>
    <property type="match status" value="1"/>
</dbReference>
<dbReference type="Gene3D" id="3.20.20.70">
    <property type="entry name" value="Aldolase class I"/>
    <property type="match status" value="1"/>
</dbReference>
<dbReference type="HAMAP" id="MF_00056">
    <property type="entry name" value="KDO8P_synth"/>
    <property type="match status" value="1"/>
</dbReference>
<dbReference type="InterPro" id="IPR013785">
    <property type="entry name" value="Aldolase_TIM"/>
</dbReference>
<dbReference type="InterPro" id="IPR006218">
    <property type="entry name" value="DAHP1/KDSA"/>
</dbReference>
<dbReference type="InterPro" id="IPR006269">
    <property type="entry name" value="KDO8P_synthase"/>
</dbReference>
<dbReference type="NCBIfam" id="TIGR01362">
    <property type="entry name" value="KDO8P_synth"/>
    <property type="match status" value="1"/>
</dbReference>
<dbReference type="NCBIfam" id="NF003543">
    <property type="entry name" value="PRK05198.1"/>
    <property type="match status" value="1"/>
</dbReference>
<dbReference type="NCBIfam" id="NF009109">
    <property type="entry name" value="PRK12457.1"/>
    <property type="match status" value="1"/>
</dbReference>
<dbReference type="PANTHER" id="PTHR21057">
    <property type="entry name" value="PHOSPHO-2-DEHYDRO-3-DEOXYHEPTONATE ALDOLASE"/>
    <property type="match status" value="1"/>
</dbReference>
<dbReference type="Pfam" id="PF00793">
    <property type="entry name" value="DAHP_synth_1"/>
    <property type="match status" value="1"/>
</dbReference>
<dbReference type="SUPFAM" id="SSF51569">
    <property type="entry name" value="Aldolase"/>
    <property type="match status" value="1"/>
</dbReference>
<feature type="chain" id="PRO_0000187131" description="2-dehydro-3-deoxyphosphooctonate aldolase">
    <location>
        <begin position="1"/>
        <end position="284"/>
    </location>
</feature>
<feature type="strand" evidence="3">
    <location>
        <begin position="6"/>
        <end position="8"/>
    </location>
</feature>
<feature type="strand" evidence="3">
    <location>
        <begin position="11"/>
        <end position="13"/>
    </location>
</feature>
<feature type="strand" evidence="3">
    <location>
        <begin position="20"/>
        <end position="27"/>
    </location>
</feature>
<feature type="helix" evidence="3">
    <location>
        <begin position="31"/>
        <end position="48"/>
    </location>
</feature>
<feature type="strand" evidence="3">
    <location>
        <begin position="52"/>
        <end position="58"/>
    </location>
</feature>
<feature type="helix" evidence="3">
    <location>
        <begin position="74"/>
        <end position="88"/>
    </location>
</feature>
<feature type="strand" evidence="3">
    <location>
        <begin position="91"/>
        <end position="95"/>
    </location>
</feature>
<feature type="helix" evidence="3">
    <location>
        <begin position="99"/>
        <end position="101"/>
    </location>
</feature>
<feature type="helix" evidence="3">
    <location>
        <begin position="102"/>
        <end position="106"/>
    </location>
</feature>
<feature type="strand" evidence="3">
    <location>
        <begin position="110"/>
        <end position="114"/>
    </location>
</feature>
<feature type="helix" evidence="3">
    <location>
        <begin position="116"/>
        <end position="118"/>
    </location>
</feature>
<feature type="helix" evidence="3">
    <location>
        <begin position="122"/>
        <end position="130"/>
    </location>
</feature>
<feature type="strand" evidence="3">
    <location>
        <begin position="134"/>
        <end position="138"/>
    </location>
</feature>
<feature type="helix" evidence="3">
    <location>
        <begin position="145"/>
        <end position="147"/>
    </location>
</feature>
<feature type="helix" evidence="3">
    <location>
        <begin position="148"/>
        <end position="157"/>
    </location>
</feature>
<feature type="strand" evidence="3">
    <location>
        <begin position="163"/>
        <end position="167"/>
    </location>
</feature>
<feature type="helix" evidence="3">
    <location>
        <begin position="183"/>
        <end position="190"/>
    </location>
</feature>
<feature type="strand" evidence="3">
    <location>
        <begin position="196"/>
        <end position="199"/>
    </location>
</feature>
<feature type="helix" evidence="3">
    <location>
        <begin position="200"/>
        <end position="203"/>
    </location>
</feature>
<feature type="helix" evidence="3">
    <location>
        <begin position="221"/>
        <end position="231"/>
    </location>
</feature>
<feature type="strand" evidence="3">
    <location>
        <begin position="234"/>
        <end position="243"/>
    </location>
</feature>
<feature type="helix" evidence="3">
    <location>
        <begin position="244"/>
        <end position="246"/>
    </location>
</feature>
<feature type="helix" evidence="3">
    <location>
        <begin position="257"/>
        <end position="259"/>
    </location>
</feature>
<feature type="helix" evidence="3">
    <location>
        <begin position="260"/>
        <end position="276"/>
    </location>
</feature>
<reference key="1">
    <citation type="journal article" date="1995" name="Science">
        <title>Whole-genome random sequencing and assembly of Haemophilus influenzae Rd.</title>
        <authorList>
            <person name="Fleischmann R.D."/>
            <person name="Adams M.D."/>
            <person name="White O."/>
            <person name="Clayton R.A."/>
            <person name="Kirkness E.F."/>
            <person name="Kerlavage A.R."/>
            <person name="Bult C.J."/>
            <person name="Tomb J.-F."/>
            <person name="Dougherty B.A."/>
            <person name="Merrick J.M."/>
            <person name="McKenney K."/>
            <person name="Sutton G.G."/>
            <person name="FitzHugh W."/>
            <person name="Fields C.A."/>
            <person name="Gocayne J.D."/>
            <person name="Scott J.D."/>
            <person name="Shirley R."/>
            <person name="Liu L.-I."/>
            <person name="Glodek A."/>
            <person name="Kelley J.M."/>
            <person name="Weidman J.F."/>
            <person name="Phillips C.A."/>
            <person name="Spriggs T."/>
            <person name="Hedblom E."/>
            <person name="Cotton M.D."/>
            <person name="Utterback T.R."/>
            <person name="Hanna M.C."/>
            <person name="Nguyen D.T."/>
            <person name="Saudek D.M."/>
            <person name="Brandon R.C."/>
            <person name="Fine L.D."/>
            <person name="Fritchman J.L."/>
            <person name="Fuhrmann J.L."/>
            <person name="Geoghagen N.S.M."/>
            <person name="Gnehm C.L."/>
            <person name="McDonald L.A."/>
            <person name="Small K.V."/>
            <person name="Fraser C.M."/>
            <person name="Smith H.O."/>
            <person name="Venter J.C."/>
        </authorList>
    </citation>
    <scope>NUCLEOTIDE SEQUENCE [LARGE SCALE GENOMIC DNA]</scope>
    <source>
        <strain>ATCC 51907 / DSM 11121 / KW20 / Rd</strain>
    </source>
</reference>
<comment type="catalytic activity">
    <reaction>
        <text>D-arabinose 5-phosphate + phosphoenolpyruvate + H2O = 3-deoxy-alpha-D-manno-2-octulosonate-8-phosphate + phosphate</text>
        <dbReference type="Rhea" id="RHEA:14053"/>
        <dbReference type="ChEBI" id="CHEBI:15377"/>
        <dbReference type="ChEBI" id="CHEBI:43474"/>
        <dbReference type="ChEBI" id="CHEBI:57693"/>
        <dbReference type="ChEBI" id="CHEBI:58702"/>
        <dbReference type="ChEBI" id="CHEBI:85985"/>
        <dbReference type="EC" id="2.5.1.55"/>
    </reaction>
</comment>
<comment type="pathway">
    <text>Carbohydrate biosynthesis; 3-deoxy-D-manno-octulosonate biosynthesis; 3-deoxy-D-manno-octulosonate from D-ribulose 5-phosphate: step 2/3.</text>
</comment>
<comment type="pathway">
    <text>Bacterial outer membrane biogenesis; lipopolysaccharide biosynthesis.</text>
</comment>
<comment type="subcellular location">
    <subcellularLocation>
        <location evidence="1">Cytoplasm</location>
    </subcellularLocation>
</comment>
<comment type="similarity">
    <text evidence="2">Belongs to the KdsA family.</text>
</comment>
<protein>
    <recommendedName>
        <fullName>2-dehydro-3-deoxyphosphooctonate aldolase</fullName>
        <ecNumber>2.5.1.55</ecNumber>
    </recommendedName>
    <alternativeName>
        <fullName>3-deoxy-D-manno-octulosonic acid 8-phosphate synthase</fullName>
    </alternativeName>
    <alternativeName>
        <fullName>KDO-8-phosphate synthase</fullName>
        <shortName>KDO 8-P synthase</shortName>
        <shortName>KDOPS</shortName>
    </alternativeName>
    <alternativeName>
        <fullName>Phospho-2-dehydro-3-deoxyoctonate aldolase</fullName>
    </alternativeName>
</protein>
<name>KDSA_HAEIN</name>
<accession>P45251</accession>
<proteinExistence type="evidence at protein level"/>
<evidence type="ECO:0000250" key="1"/>
<evidence type="ECO:0000305" key="2"/>
<evidence type="ECO:0007829" key="3">
    <source>
        <dbReference type="PDB" id="1O60"/>
    </source>
</evidence>
<organism>
    <name type="scientific">Haemophilus influenzae (strain ATCC 51907 / DSM 11121 / KW20 / Rd)</name>
    <dbReference type="NCBI Taxonomy" id="71421"/>
    <lineage>
        <taxon>Bacteria</taxon>
        <taxon>Pseudomonadati</taxon>
        <taxon>Pseudomonadota</taxon>
        <taxon>Gammaproteobacteria</taxon>
        <taxon>Pasteurellales</taxon>
        <taxon>Pasteurellaceae</taxon>
        <taxon>Haemophilus</taxon>
    </lineage>
</organism>
<sequence length="284" mass="30921">MQNKIVKIGNIDVANDKPFVLFGGMNVLESRDMAMQVCEAYVKVTEKLGVPYVFKASFDKANRSSIHSYRGPGMEEGLKIFQELKDTFGVKIITDVHEIYQCQPVADVVDIIQLPAFLARQTDLVEAMAKTGAVINVKKPQFLSPSQMGNIVEKIEECGNDKIILCDRGTNFGYDNLIVDMLGFSVMKKASKGSPVIFDVTHSLQCRDPFGAASSGRRAQVTELARSGLAVGIAGLFLEAHPNPNQAKCDGPSALPLSALEGFVSQMKAIDDLVKSFPELDTSI</sequence>